<keyword id="KW-0687">Ribonucleoprotein</keyword>
<keyword id="KW-0689">Ribosomal protein</keyword>
<organism>
    <name type="scientific">Streptococcus pneumoniae (strain Hungary19A-6)</name>
    <dbReference type="NCBI Taxonomy" id="487214"/>
    <lineage>
        <taxon>Bacteria</taxon>
        <taxon>Bacillati</taxon>
        <taxon>Bacillota</taxon>
        <taxon>Bacilli</taxon>
        <taxon>Lactobacillales</taxon>
        <taxon>Streptococcaceae</taxon>
        <taxon>Streptococcus</taxon>
    </lineage>
</organism>
<accession>B1I8U6</accession>
<name>RL34_STRPI</name>
<proteinExistence type="inferred from homology"/>
<evidence type="ECO:0000255" key="1">
    <source>
        <dbReference type="HAMAP-Rule" id="MF_00391"/>
    </source>
</evidence>
<evidence type="ECO:0000256" key="2">
    <source>
        <dbReference type="SAM" id="MobiDB-lite"/>
    </source>
</evidence>
<evidence type="ECO:0000305" key="3"/>
<reference key="1">
    <citation type="journal article" date="2010" name="Genome Biol.">
        <title>Structure and dynamics of the pan-genome of Streptococcus pneumoniae and closely related species.</title>
        <authorList>
            <person name="Donati C."/>
            <person name="Hiller N.L."/>
            <person name="Tettelin H."/>
            <person name="Muzzi A."/>
            <person name="Croucher N.J."/>
            <person name="Angiuoli S.V."/>
            <person name="Oggioni M."/>
            <person name="Dunning Hotopp J.C."/>
            <person name="Hu F.Z."/>
            <person name="Riley D.R."/>
            <person name="Covacci A."/>
            <person name="Mitchell T.J."/>
            <person name="Bentley S.D."/>
            <person name="Kilian M."/>
            <person name="Ehrlich G.D."/>
            <person name="Rappuoli R."/>
            <person name="Moxon E.R."/>
            <person name="Masignani V."/>
        </authorList>
    </citation>
    <scope>NUCLEOTIDE SEQUENCE [LARGE SCALE GENOMIC DNA]</scope>
    <source>
        <strain>Hungary19A-6</strain>
    </source>
</reference>
<sequence length="44" mass="5265">MKRTYQPSKLRRARKHGFRNRMSTKNGRRVLAARRRKGRKVLAA</sequence>
<comment type="similarity">
    <text evidence="1">Belongs to the bacterial ribosomal protein bL34 family.</text>
</comment>
<dbReference type="EMBL" id="CP000936">
    <property type="protein sequence ID" value="ACA36660.1"/>
    <property type="molecule type" value="Genomic_DNA"/>
</dbReference>
<dbReference type="RefSeq" id="WP_000831905.1">
    <property type="nucleotide sequence ID" value="NC_010380.1"/>
</dbReference>
<dbReference type="SMR" id="B1I8U6"/>
<dbReference type="GeneID" id="93738550"/>
<dbReference type="KEGG" id="spv:SPH_2135"/>
<dbReference type="HOGENOM" id="CLU_129938_2_0_9"/>
<dbReference type="Proteomes" id="UP000002163">
    <property type="component" value="Chromosome"/>
</dbReference>
<dbReference type="GO" id="GO:1990904">
    <property type="term" value="C:ribonucleoprotein complex"/>
    <property type="evidence" value="ECO:0007669"/>
    <property type="project" value="UniProtKB-KW"/>
</dbReference>
<dbReference type="GO" id="GO:0005840">
    <property type="term" value="C:ribosome"/>
    <property type="evidence" value="ECO:0007669"/>
    <property type="project" value="UniProtKB-KW"/>
</dbReference>
<dbReference type="GO" id="GO:0003735">
    <property type="term" value="F:structural constituent of ribosome"/>
    <property type="evidence" value="ECO:0007669"/>
    <property type="project" value="InterPro"/>
</dbReference>
<dbReference type="GO" id="GO:0006412">
    <property type="term" value="P:translation"/>
    <property type="evidence" value="ECO:0007669"/>
    <property type="project" value="UniProtKB-UniRule"/>
</dbReference>
<dbReference type="FunFam" id="1.10.287.3980:FF:000001">
    <property type="entry name" value="Mitochondrial ribosomal protein L34"/>
    <property type="match status" value="1"/>
</dbReference>
<dbReference type="Gene3D" id="1.10.287.3980">
    <property type="match status" value="1"/>
</dbReference>
<dbReference type="HAMAP" id="MF_00391">
    <property type="entry name" value="Ribosomal_bL34"/>
    <property type="match status" value="1"/>
</dbReference>
<dbReference type="InterPro" id="IPR000271">
    <property type="entry name" value="Ribosomal_bL34"/>
</dbReference>
<dbReference type="InterPro" id="IPR020939">
    <property type="entry name" value="Ribosomal_bL34_CS"/>
</dbReference>
<dbReference type="NCBIfam" id="TIGR01030">
    <property type="entry name" value="rpmH_bact"/>
    <property type="match status" value="1"/>
</dbReference>
<dbReference type="PANTHER" id="PTHR14503:SF4">
    <property type="entry name" value="LARGE RIBOSOMAL SUBUNIT PROTEIN BL34M"/>
    <property type="match status" value="1"/>
</dbReference>
<dbReference type="PANTHER" id="PTHR14503">
    <property type="entry name" value="MITOCHONDRIAL RIBOSOMAL PROTEIN 34 FAMILY MEMBER"/>
    <property type="match status" value="1"/>
</dbReference>
<dbReference type="Pfam" id="PF00468">
    <property type="entry name" value="Ribosomal_L34"/>
    <property type="match status" value="1"/>
</dbReference>
<dbReference type="PROSITE" id="PS00784">
    <property type="entry name" value="RIBOSOMAL_L34"/>
    <property type="match status" value="1"/>
</dbReference>
<protein>
    <recommendedName>
        <fullName evidence="1">Large ribosomal subunit protein bL34</fullName>
    </recommendedName>
    <alternativeName>
        <fullName evidence="3">50S ribosomal protein L34</fullName>
    </alternativeName>
</protein>
<feature type="chain" id="PRO_1000196120" description="Large ribosomal subunit protein bL34">
    <location>
        <begin position="1"/>
        <end position="44"/>
    </location>
</feature>
<feature type="region of interest" description="Disordered" evidence="2">
    <location>
        <begin position="1"/>
        <end position="44"/>
    </location>
</feature>
<feature type="compositionally biased region" description="Basic residues" evidence="2">
    <location>
        <begin position="1"/>
        <end position="19"/>
    </location>
</feature>
<feature type="compositionally biased region" description="Basic residues" evidence="2">
    <location>
        <begin position="26"/>
        <end position="44"/>
    </location>
</feature>
<gene>
    <name evidence="1" type="primary">rpmH</name>
    <name type="ordered locus">SPH_2135</name>
</gene>